<dbReference type="EMBL" id="AE016830">
    <property type="protein sequence ID" value="AAO81100.1"/>
    <property type="molecule type" value="Genomic_DNA"/>
</dbReference>
<dbReference type="RefSeq" id="NP_815030.1">
    <property type="nucleotide sequence ID" value="NC_004668.1"/>
</dbReference>
<dbReference type="RefSeq" id="WP_002357825.1">
    <property type="nucleotide sequence ID" value="NZ_KE136528.1"/>
</dbReference>
<dbReference type="SMR" id="Q835R7"/>
<dbReference type="STRING" id="226185.EF_1308"/>
<dbReference type="EnsemblBacteria" id="AAO81100">
    <property type="protein sequence ID" value="AAO81100"/>
    <property type="gene ID" value="EF_1308"/>
</dbReference>
<dbReference type="GeneID" id="60893691"/>
<dbReference type="KEGG" id="efa:EF1308"/>
<dbReference type="PATRIC" id="fig|226185.45.peg.2193"/>
<dbReference type="eggNOG" id="COG0443">
    <property type="taxonomic scope" value="Bacteria"/>
</dbReference>
<dbReference type="HOGENOM" id="CLU_005965_2_4_9"/>
<dbReference type="Proteomes" id="UP000001415">
    <property type="component" value="Chromosome"/>
</dbReference>
<dbReference type="GO" id="GO:0005524">
    <property type="term" value="F:ATP binding"/>
    <property type="evidence" value="ECO:0007669"/>
    <property type="project" value="UniProtKB-UniRule"/>
</dbReference>
<dbReference type="GO" id="GO:0140662">
    <property type="term" value="F:ATP-dependent protein folding chaperone"/>
    <property type="evidence" value="ECO:0007669"/>
    <property type="project" value="InterPro"/>
</dbReference>
<dbReference type="GO" id="GO:0051082">
    <property type="term" value="F:unfolded protein binding"/>
    <property type="evidence" value="ECO:0007669"/>
    <property type="project" value="InterPro"/>
</dbReference>
<dbReference type="CDD" id="cd10234">
    <property type="entry name" value="ASKHA_NBD_HSP70_DnaK-like"/>
    <property type="match status" value="1"/>
</dbReference>
<dbReference type="FunFam" id="2.60.34.10:FF:000014">
    <property type="entry name" value="Chaperone protein DnaK HSP70"/>
    <property type="match status" value="1"/>
</dbReference>
<dbReference type="FunFam" id="1.20.1270.10:FF:000004">
    <property type="entry name" value="Molecular chaperone DnaK"/>
    <property type="match status" value="1"/>
</dbReference>
<dbReference type="FunFam" id="3.30.420.40:FF:000071">
    <property type="entry name" value="Molecular chaperone DnaK"/>
    <property type="match status" value="1"/>
</dbReference>
<dbReference type="FunFam" id="3.90.640.10:FF:000003">
    <property type="entry name" value="Molecular chaperone DnaK"/>
    <property type="match status" value="1"/>
</dbReference>
<dbReference type="Gene3D" id="1.20.1270.10">
    <property type="match status" value="1"/>
</dbReference>
<dbReference type="Gene3D" id="3.30.420.40">
    <property type="match status" value="2"/>
</dbReference>
<dbReference type="Gene3D" id="3.90.640.10">
    <property type="entry name" value="Actin, Chain A, domain 4"/>
    <property type="match status" value="1"/>
</dbReference>
<dbReference type="Gene3D" id="2.60.34.10">
    <property type="entry name" value="Substrate Binding Domain Of DNAk, Chain A, domain 1"/>
    <property type="match status" value="1"/>
</dbReference>
<dbReference type="HAMAP" id="MF_00332">
    <property type="entry name" value="DnaK"/>
    <property type="match status" value="1"/>
</dbReference>
<dbReference type="InterPro" id="IPR043129">
    <property type="entry name" value="ATPase_NBD"/>
</dbReference>
<dbReference type="InterPro" id="IPR012725">
    <property type="entry name" value="Chaperone_DnaK"/>
</dbReference>
<dbReference type="InterPro" id="IPR018181">
    <property type="entry name" value="Heat_shock_70_CS"/>
</dbReference>
<dbReference type="InterPro" id="IPR029048">
    <property type="entry name" value="HSP70_C_sf"/>
</dbReference>
<dbReference type="InterPro" id="IPR029047">
    <property type="entry name" value="HSP70_peptide-bd_sf"/>
</dbReference>
<dbReference type="InterPro" id="IPR013126">
    <property type="entry name" value="Hsp_70_fam"/>
</dbReference>
<dbReference type="NCBIfam" id="NF001413">
    <property type="entry name" value="PRK00290.1"/>
    <property type="match status" value="1"/>
</dbReference>
<dbReference type="NCBIfam" id="TIGR02350">
    <property type="entry name" value="prok_dnaK"/>
    <property type="match status" value="1"/>
</dbReference>
<dbReference type="PANTHER" id="PTHR19375">
    <property type="entry name" value="HEAT SHOCK PROTEIN 70KDA"/>
    <property type="match status" value="1"/>
</dbReference>
<dbReference type="Pfam" id="PF00012">
    <property type="entry name" value="HSP70"/>
    <property type="match status" value="1"/>
</dbReference>
<dbReference type="PRINTS" id="PR00301">
    <property type="entry name" value="HEATSHOCK70"/>
</dbReference>
<dbReference type="SUPFAM" id="SSF53067">
    <property type="entry name" value="Actin-like ATPase domain"/>
    <property type="match status" value="2"/>
</dbReference>
<dbReference type="SUPFAM" id="SSF100934">
    <property type="entry name" value="Heat shock protein 70kD (HSP70), C-terminal subdomain"/>
    <property type="match status" value="1"/>
</dbReference>
<dbReference type="SUPFAM" id="SSF100920">
    <property type="entry name" value="Heat shock protein 70kD (HSP70), peptide-binding domain"/>
    <property type="match status" value="1"/>
</dbReference>
<dbReference type="PROSITE" id="PS00297">
    <property type="entry name" value="HSP70_1"/>
    <property type="match status" value="1"/>
</dbReference>
<dbReference type="PROSITE" id="PS00329">
    <property type="entry name" value="HSP70_2"/>
    <property type="match status" value="1"/>
</dbReference>
<dbReference type="PROSITE" id="PS01036">
    <property type="entry name" value="HSP70_3"/>
    <property type="match status" value="1"/>
</dbReference>
<comment type="function">
    <text evidence="1">Acts as a chaperone.</text>
</comment>
<comment type="induction">
    <text evidence="1">By stress conditions e.g. heat shock.</text>
</comment>
<comment type="similarity">
    <text evidence="1">Belongs to the heat shock protein 70 family.</text>
</comment>
<organism>
    <name type="scientific">Enterococcus faecalis (strain ATCC 700802 / V583)</name>
    <dbReference type="NCBI Taxonomy" id="226185"/>
    <lineage>
        <taxon>Bacteria</taxon>
        <taxon>Bacillati</taxon>
        <taxon>Bacillota</taxon>
        <taxon>Bacilli</taxon>
        <taxon>Lactobacillales</taxon>
        <taxon>Enterococcaceae</taxon>
        <taxon>Enterococcus</taxon>
    </lineage>
</organism>
<accession>Q835R7</accession>
<gene>
    <name evidence="1" type="primary">dnaK</name>
    <name type="ordered locus">EF_1308</name>
</gene>
<keyword id="KW-0067">ATP-binding</keyword>
<keyword id="KW-0143">Chaperone</keyword>
<keyword id="KW-0547">Nucleotide-binding</keyword>
<keyword id="KW-0597">Phosphoprotein</keyword>
<keyword id="KW-1185">Reference proteome</keyword>
<keyword id="KW-0346">Stress response</keyword>
<evidence type="ECO:0000255" key="1">
    <source>
        <dbReference type="HAMAP-Rule" id="MF_00332"/>
    </source>
</evidence>
<evidence type="ECO:0000256" key="2">
    <source>
        <dbReference type="SAM" id="MobiDB-lite"/>
    </source>
</evidence>
<reference key="1">
    <citation type="journal article" date="2003" name="Science">
        <title>Role of mobile DNA in the evolution of vancomycin-resistant Enterococcus faecalis.</title>
        <authorList>
            <person name="Paulsen I.T."/>
            <person name="Banerjei L."/>
            <person name="Myers G.S.A."/>
            <person name="Nelson K.E."/>
            <person name="Seshadri R."/>
            <person name="Read T.D."/>
            <person name="Fouts D.E."/>
            <person name="Eisen J.A."/>
            <person name="Gill S.R."/>
            <person name="Heidelberg J.F."/>
            <person name="Tettelin H."/>
            <person name="Dodson R.J."/>
            <person name="Umayam L.A."/>
            <person name="Brinkac L.M."/>
            <person name="Beanan M.J."/>
            <person name="Daugherty S.C."/>
            <person name="DeBoy R.T."/>
            <person name="Durkin S.A."/>
            <person name="Kolonay J.F."/>
            <person name="Madupu R."/>
            <person name="Nelson W.C."/>
            <person name="Vamathevan J.J."/>
            <person name="Tran B."/>
            <person name="Upton J."/>
            <person name="Hansen T."/>
            <person name="Shetty J."/>
            <person name="Khouri H.M."/>
            <person name="Utterback T.R."/>
            <person name="Radune D."/>
            <person name="Ketchum K.A."/>
            <person name="Dougherty B.A."/>
            <person name="Fraser C.M."/>
        </authorList>
    </citation>
    <scope>NUCLEOTIDE SEQUENCE [LARGE SCALE GENOMIC DNA]</scope>
    <source>
        <strain>ATCC 700802 / V583</strain>
    </source>
</reference>
<protein>
    <recommendedName>
        <fullName evidence="1">Chaperone protein DnaK</fullName>
    </recommendedName>
    <alternativeName>
        <fullName evidence="1">HSP70</fullName>
    </alternativeName>
    <alternativeName>
        <fullName evidence="1">Heat shock 70 kDa protein</fullName>
    </alternativeName>
    <alternativeName>
        <fullName evidence="1">Heat shock protein 70</fullName>
    </alternativeName>
</protein>
<proteinExistence type="inferred from homology"/>
<feature type="chain" id="PRO_0000078462" description="Chaperone protein DnaK">
    <location>
        <begin position="1"/>
        <end position="609"/>
    </location>
</feature>
<feature type="region of interest" description="Disordered" evidence="2">
    <location>
        <begin position="577"/>
        <end position="609"/>
    </location>
</feature>
<feature type="compositionally biased region" description="Low complexity" evidence="2">
    <location>
        <begin position="577"/>
        <end position="594"/>
    </location>
</feature>
<feature type="compositionally biased region" description="Acidic residues" evidence="2">
    <location>
        <begin position="595"/>
        <end position="609"/>
    </location>
</feature>
<feature type="modified residue" description="Phosphothreonine; by autocatalysis" evidence="1">
    <location>
        <position position="174"/>
    </location>
</feature>
<sequence length="609" mass="65584">MSKIIGIDLGTTNSAVAVLEGGEAKIIANPEGNRTTPSVVSFKNGEIQVGEVAKRQAVTNPNTISSIKRHMGEAGYKVDVEGKSYTPQEVSAMILQYLKGFAEDYLGEKVEKAVITVPAYFNDAQRQATKDAGKIAGLEVERIVNEPTAAALAYGLDKTDKDEKILVFDLGGGTFDVSILELGDGVFDVLSTAGDNNLGGDDFDNKIIDYMVAEFKKENGIDLANDKMALQRLKDAAEKAKKDLSGVTSTQISLPFITAGEAGPLHLEMNLTRAKFDELTSDLVERTKVPVRQALKDAGLNPSEIDEVILVGGSTRIPAVVEAVRKETNKEPNKSVNPDEVVAMGAAIQGGVITGDVKDVVLLDVTPLSLGIETMGGVFTKLIDRNTTIPTSKSQVFSTAADNQPAVDIHVLQGERPMAADNKTLGRFQLTDIPAAPRGVPQIEVSFDIDKNGIVNVRAKDLGTQKEQTITIKSSSGLSDDEIERMVKDAEANAEADKQRKEEVDLRNDADALLFTVDKTLKELEGKVDAEEVKKAEDARDELKAAIEANDIEQMKAKRDSLNEIVQNLTVKLYEQAAQQQAQENPEAAQGGADDVVDADFEEVNGDDK</sequence>
<name>DNAK_ENTFA</name>